<gene>
    <name evidence="1" type="primary">ruvC</name>
    <name type="ordered locus">DET0443</name>
</gene>
<comment type="function">
    <text evidence="1">The RuvA-RuvB-RuvC complex processes Holliday junction (HJ) DNA during genetic recombination and DNA repair. Endonuclease that resolves HJ intermediates. Cleaves cruciform DNA by making single-stranded nicks across the HJ at symmetrical positions within the homologous arms, yielding a 5'-phosphate and a 3'-hydroxyl group; requires a central core of homology in the junction. The consensus cleavage sequence is 5'-(A/T)TT(C/G)-3'. Cleavage occurs on the 3'-side of the TT dinucleotide at the point of strand exchange. HJ branch migration catalyzed by RuvA-RuvB allows RuvC to scan DNA until it finds its consensus sequence, where it cleaves and resolves the cruciform DNA.</text>
</comment>
<comment type="catalytic activity">
    <reaction evidence="1">
        <text>Endonucleolytic cleavage at a junction such as a reciprocal single-stranded crossover between two homologous DNA duplexes (Holliday junction).</text>
        <dbReference type="EC" id="3.1.21.10"/>
    </reaction>
</comment>
<comment type="cofactor">
    <cofactor evidence="1">
        <name>Mg(2+)</name>
        <dbReference type="ChEBI" id="CHEBI:18420"/>
    </cofactor>
    <text evidence="1">Binds 2 Mg(2+) ion per subunit.</text>
</comment>
<comment type="subunit">
    <text evidence="1">Homodimer which binds Holliday junction (HJ) DNA. The HJ becomes 2-fold symmetrical on binding to RuvC with unstacked arms; it has a different conformation from HJ DNA in complex with RuvA. In the full resolvosome a probable DNA-RuvA(4)-RuvB(12)-RuvC(2) complex forms which resolves the HJ.</text>
</comment>
<comment type="subcellular location">
    <subcellularLocation>
        <location evidence="1">Cytoplasm</location>
    </subcellularLocation>
</comment>
<comment type="similarity">
    <text evidence="1">Belongs to the RuvC family.</text>
</comment>
<dbReference type="EC" id="3.1.21.10" evidence="1"/>
<dbReference type="EMBL" id="CP000027">
    <property type="protein sequence ID" value="AAW40252.1"/>
    <property type="molecule type" value="Genomic_DNA"/>
</dbReference>
<dbReference type="RefSeq" id="WP_010936220.1">
    <property type="nucleotide sequence ID" value="NC_002936.3"/>
</dbReference>
<dbReference type="SMR" id="Q3Z9B2"/>
<dbReference type="STRING" id="243164.DET0443"/>
<dbReference type="GeneID" id="3230216"/>
<dbReference type="KEGG" id="det:DET0443"/>
<dbReference type="PATRIC" id="fig|243164.10.peg.421"/>
<dbReference type="eggNOG" id="COG0817">
    <property type="taxonomic scope" value="Bacteria"/>
</dbReference>
<dbReference type="HOGENOM" id="CLU_091257_3_1_0"/>
<dbReference type="InParanoid" id="Q3Z9B2"/>
<dbReference type="Proteomes" id="UP000008289">
    <property type="component" value="Chromosome"/>
</dbReference>
<dbReference type="GO" id="GO:0005737">
    <property type="term" value="C:cytoplasm"/>
    <property type="evidence" value="ECO:0007669"/>
    <property type="project" value="UniProtKB-SubCell"/>
</dbReference>
<dbReference type="GO" id="GO:0048476">
    <property type="term" value="C:Holliday junction resolvase complex"/>
    <property type="evidence" value="ECO:0007669"/>
    <property type="project" value="UniProtKB-UniRule"/>
</dbReference>
<dbReference type="GO" id="GO:0008821">
    <property type="term" value="F:crossover junction DNA endonuclease activity"/>
    <property type="evidence" value="ECO:0007669"/>
    <property type="project" value="UniProtKB-UniRule"/>
</dbReference>
<dbReference type="GO" id="GO:0003677">
    <property type="term" value="F:DNA binding"/>
    <property type="evidence" value="ECO:0007669"/>
    <property type="project" value="UniProtKB-KW"/>
</dbReference>
<dbReference type="GO" id="GO:0000287">
    <property type="term" value="F:magnesium ion binding"/>
    <property type="evidence" value="ECO:0007669"/>
    <property type="project" value="UniProtKB-UniRule"/>
</dbReference>
<dbReference type="GO" id="GO:0006310">
    <property type="term" value="P:DNA recombination"/>
    <property type="evidence" value="ECO:0007669"/>
    <property type="project" value="UniProtKB-UniRule"/>
</dbReference>
<dbReference type="GO" id="GO:0006281">
    <property type="term" value="P:DNA repair"/>
    <property type="evidence" value="ECO:0007669"/>
    <property type="project" value="UniProtKB-UniRule"/>
</dbReference>
<dbReference type="CDD" id="cd16962">
    <property type="entry name" value="RuvC"/>
    <property type="match status" value="1"/>
</dbReference>
<dbReference type="FunFam" id="3.30.420.10:FF:000002">
    <property type="entry name" value="Crossover junction endodeoxyribonuclease RuvC"/>
    <property type="match status" value="1"/>
</dbReference>
<dbReference type="Gene3D" id="3.30.420.10">
    <property type="entry name" value="Ribonuclease H-like superfamily/Ribonuclease H"/>
    <property type="match status" value="1"/>
</dbReference>
<dbReference type="HAMAP" id="MF_00034">
    <property type="entry name" value="RuvC"/>
    <property type="match status" value="1"/>
</dbReference>
<dbReference type="InterPro" id="IPR012337">
    <property type="entry name" value="RNaseH-like_sf"/>
</dbReference>
<dbReference type="InterPro" id="IPR036397">
    <property type="entry name" value="RNaseH_sf"/>
</dbReference>
<dbReference type="InterPro" id="IPR020563">
    <property type="entry name" value="X-over_junc_endoDNase_Mg_BS"/>
</dbReference>
<dbReference type="InterPro" id="IPR002176">
    <property type="entry name" value="X-over_junc_endoDNase_RuvC"/>
</dbReference>
<dbReference type="NCBIfam" id="NF000711">
    <property type="entry name" value="PRK00039.2-1"/>
    <property type="match status" value="1"/>
</dbReference>
<dbReference type="NCBIfam" id="TIGR00228">
    <property type="entry name" value="ruvC"/>
    <property type="match status" value="1"/>
</dbReference>
<dbReference type="PANTHER" id="PTHR30194">
    <property type="entry name" value="CROSSOVER JUNCTION ENDODEOXYRIBONUCLEASE RUVC"/>
    <property type="match status" value="1"/>
</dbReference>
<dbReference type="PANTHER" id="PTHR30194:SF3">
    <property type="entry name" value="CROSSOVER JUNCTION ENDODEOXYRIBONUCLEASE RUVC"/>
    <property type="match status" value="1"/>
</dbReference>
<dbReference type="Pfam" id="PF02075">
    <property type="entry name" value="RuvC"/>
    <property type="match status" value="1"/>
</dbReference>
<dbReference type="PRINTS" id="PR00696">
    <property type="entry name" value="RSOLVASERUVC"/>
</dbReference>
<dbReference type="SUPFAM" id="SSF53098">
    <property type="entry name" value="Ribonuclease H-like"/>
    <property type="match status" value="1"/>
</dbReference>
<dbReference type="PROSITE" id="PS01321">
    <property type="entry name" value="RUVC"/>
    <property type="match status" value="1"/>
</dbReference>
<name>RUVC_DEHM1</name>
<feature type="chain" id="PRO_0000225137" description="Crossover junction endodeoxyribonuclease RuvC">
    <location>
        <begin position="1"/>
        <end position="165"/>
    </location>
</feature>
<feature type="active site" evidence="1">
    <location>
        <position position="7"/>
    </location>
</feature>
<feature type="active site" evidence="1">
    <location>
        <position position="67"/>
    </location>
</feature>
<feature type="active site" evidence="1">
    <location>
        <position position="140"/>
    </location>
</feature>
<feature type="binding site" evidence="1">
    <location>
        <position position="7"/>
    </location>
    <ligand>
        <name>Mg(2+)</name>
        <dbReference type="ChEBI" id="CHEBI:18420"/>
        <label>1</label>
    </ligand>
</feature>
<feature type="binding site" evidence="1">
    <location>
        <position position="67"/>
    </location>
    <ligand>
        <name>Mg(2+)</name>
        <dbReference type="ChEBI" id="CHEBI:18420"/>
        <label>2</label>
    </ligand>
</feature>
<feature type="binding site" evidence="1">
    <location>
        <position position="140"/>
    </location>
    <ligand>
        <name>Mg(2+)</name>
        <dbReference type="ChEBI" id="CHEBI:18420"/>
        <label>1</label>
    </ligand>
</feature>
<proteinExistence type="inferred from homology"/>
<reference key="1">
    <citation type="journal article" date="2005" name="Science">
        <title>Genome sequence of the PCE-dechlorinating bacterium Dehalococcoides ethenogenes.</title>
        <authorList>
            <person name="Seshadri R."/>
            <person name="Adrian L."/>
            <person name="Fouts D.E."/>
            <person name="Eisen J.A."/>
            <person name="Phillippy A.M."/>
            <person name="Methe B.A."/>
            <person name="Ward N.L."/>
            <person name="Nelson W.C."/>
            <person name="DeBoy R.T."/>
            <person name="Khouri H.M."/>
            <person name="Kolonay J.F."/>
            <person name="Dodson R.J."/>
            <person name="Daugherty S.C."/>
            <person name="Brinkac L.M."/>
            <person name="Sullivan S.A."/>
            <person name="Madupu R."/>
            <person name="Nelson K.E."/>
            <person name="Kang K.H."/>
            <person name="Impraim M."/>
            <person name="Tran K."/>
            <person name="Robinson J.M."/>
            <person name="Forberger H.A."/>
            <person name="Fraser C.M."/>
            <person name="Zinder S.H."/>
            <person name="Heidelberg J.F."/>
        </authorList>
    </citation>
    <scope>NUCLEOTIDE SEQUENCE [LARGE SCALE GENOMIC DNA]</scope>
    <source>
        <strain>ATCC BAA-2266 / KCTC 15142 / 195</strain>
    </source>
</reference>
<sequence>MRILGIDPGTMVVGYGVIEAADDELSLIGFSSLTPPASAPIPQRLAYIYKGLVEVIELYQPDEVAVESPFADKNIKSALAIGKAQAVALLAAANHSLSVTEYSPACIKSRVSGSGTASKEQIQEMVRLLLNLAEIPQPNDAADALAVAICHHSHRAFANITSQGD</sequence>
<protein>
    <recommendedName>
        <fullName evidence="1">Crossover junction endodeoxyribonuclease RuvC</fullName>
        <ecNumber evidence="1">3.1.21.10</ecNumber>
    </recommendedName>
    <alternativeName>
        <fullName evidence="1">Holliday junction nuclease RuvC</fullName>
    </alternativeName>
    <alternativeName>
        <fullName evidence="1">Holliday junction resolvase RuvC</fullName>
    </alternativeName>
</protein>
<organism>
    <name type="scientific">Dehalococcoides mccartyi (strain ATCC BAA-2266 / KCTC 15142 / 195)</name>
    <name type="common">Dehalococcoides ethenogenes (strain 195)</name>
    <dbReference type="NCBI Taxonomy" id="243164"/>
    <lineage>
        <taxon>Bacteria</taxon>
        <taxon>Bacillati</taxon>
        <taxon>Chloroflexota</taxon>
        <taxon>Dehalococcoidia</taxon>
        <taxon>Dehalococcoidales</taxon>
        <taxon>Dehalococcoidaceae</taxon>
        <taxon>Dehalococcoides</taxon>
    </lineage>
</organism>
<keyword id="KW-0963">Cytoplasm</keyword>
<keyword id="KW-0227">DNA damage</keyword>
<keyword id="KW-0233">DNA recombination</keyword>
<keyword id="KW-0234">DNA repair</keyword>
<keyword id="KW-0238">DNA-binding</keyword>
<keyword id="KW-0255">Endonuclease</keyword>
<keyword id="KW-0378">Hydrolase</keyword>
<keyword id="KW-0460">Magnesium</keyword>
<keyword id="KW-0479">Metal-binding</keyword>
<keyword id="KW-0540">Nuclease</keyword>
<accession>Q3Z9B2</accession>
<evidence type="ECO:0000255" key="1">
    <source>
        <dbReference type="HAMAP-Rule" id="MF_00034"/>
    </source>
</evidence>